<comment type="function">
    <text evidence="1">Involved in urease metallocenter assembly. Binds nickel. Probably functions as a nickel donor during metallocenter assembly.</text>
</comment>
<comment type="subcellular location">
    <subcellularLocation>
        <location evidence="1">Cytoplasm</location>
    </subcellularLocation>
</comment>
<comment type="similarity">
    <text evidence="1">Belongs to the UreE family.</text>
</comment>
<keyword id="KW-0143">Chaperone</keyword>
<keyword id="KW-0963">Cytoplasm</keyword>
<keyword id="KW-0533">Nickel</keyword>
<keyword id="KW-0996">Nickel insertion</keyword>
<sequence length="185" mass="21072">MKIINPILPIIENILGNLTALQAEGKITTQPIERIALQWYESERNILRKTTNTGREVAFRLLKEGQRLKHDDVVFISDELVIAIEILPSEVIVLSPKTLPEMARACYEIGNKHSPLFLDGDEVTLPYDKPMFEWLQAAGFHPQKAERRLSQALRANSAQGHGHSHSHSHDHHGYHHHGDGNWHKH</sequence>
<organism>
    <name type="scientific">Haemophilus influenzae (strain PittGG)</name>
    <dbReference type="NCBI Taxonomy" id="374931"/>
    <lineage>
        <taxon>Bacteria</taxon>
        <taxon>Pseudomonadati</taxon>
        <taxon>Pseudomonadota</taxon>
        <taxon>Gammaproteobacteria</taxon>
        <taxon>Pasteurellales</taxon>
        <taxon>Pasteurellaceae</taxon>
        <taxon>Haemophilus</taxon>
    </lineage>
</organism>
<reference key="1">
    <citation type="journal article" date="2007" name="Genome Biol.">
        <title>Characterization and modeling of the Haemophilus influenzae core and supragenomes based on the complete genomic sequences of Rd and 12 clinical nontypeable strains.</title>
        <authorList>
            <person name="Hogg J.S."/>
            <person name="Hu F.Z."/>
            <person name="Janto B."/>
            <person name="Boissy R."/>
            <person name="Hayes J."/>
            <person name="Keefe R."/>
            <person name="Post J.C."/>
            <person name="Ehrlich G.D."/>
        </authorList>
    </citation>
    <scope>NUCLEOTIDE SEQUENCE [LARGE SCALE GENOMIC DNA]</scope>
    <source>
        <strain>PittGG</strain>
    </source>
</reference>
<accession>A5UH44</accession>
<protein>
    <recommendedName>
        <fullName evidence="1">Urease accessory protein UreE</fullName>
    </recommendedName>
</protein>
<name>UREE_HAEIG</name>
<feature type="chain" id="PRO_1000062546" description="Urease accessory protein UreE">
    <location>
        <begin position="1"/>
        <end position="185"/>
    </location>
</feature>
<feature type="region of interest" description="Disordered" evidence="2">
    <location>
        <begin position="153"/>
        <end position="185"/>
    </location>
</feature>
<feature type="compositionally biased region" description="Basic residues" evidence="2">
    <location>
        <begin position="162"/>
        <end position="175"/>
    </location>
</feature>
<feature type="compositionally biased region" description="Basic and acidic residues" evidence="2">
    <location>
        <begin position="176"/>
        <end position="185"/>
    </location>
</feature>
<dbReference type="EMBL" id="CP000672">
    <property type="protein sequence ID" value="ABR00100.1"/>
    <property type="molecule type" value="Genomic_DNA"/>
</dbReference>
<dbReference type="SMR" id="A5UH44"/>
<dbReference type="KEGG" id="hiq:CGSHiGG_05945"/>
<dbReference type="HOGENOM" id="CLU_093757_3_0_6"/>
<dbReference type="Proteomes" id="UP000001990">
    <property type="component" value="Chromosome"/>
</dbReference>
<dbReference type="GO" id="GO:0005737">
    <property type="term" value="C:cytoplasm"/>
    <property type="evidence" value="ECO:0007669"/>
    <property type="project" value="UniProtKB-SubCell"/>
</dbReference>
<dbReference type="GO" id="GO:0016151">
    <property type="term" value="F:nickel cation binding"/>
    <property type="evidence" value="ECO:0007669"/>
    <property type="project" value="UniProtKB-UniRule"/>
</dbReference>
<dbReference type="GO" id="GO:0051082">
    <property type="term" value="F:unfolded protein binding"/>
    <property type="evidence" value="ECO:0007669"/>
    <property type="project" value="UniProtKB-UniRule"/>
</dbReference>
<dbReference type="GO" id="GO:0006457">
    <property type="term" value="P:protein folding"/>
    <property type="evidence" value="ECO:0007669"/>
    <property type="project" value="InterPro"/>
</dbReference>
<dbReference type="GO" id="GO:0065003">
    <property type="term" value="P:protein-containing complex assembly"/>
    <property type="evidence" value="ECO:0007669"/>
    <property type="project" value="InterPro"/>
</dbReference>
<dbReference type="GO" id="GO:0019627">
    <property type="term" value="P:urea metabolic process"/>
    <property type="evidence" value="ECO:0007669"/>
    <property type="project" value="InterPro"/>
</dbReference>
<dbReference type="CDD" id="cd00571">
    <property type="entry name" value="UreE"/>
    <property type="match status" value="1"/>
</dbReference>
<dbReference type="Gene3D" id="2.60.260.20">
    <property type="entry name" value="Urease metallochaperone UreE, N-terminal domain"/>
    <property type="match status" value="1"/>
</dbReference>
<dbReference type="Gene3D" id="3.30.70.790">
    <property type="entry name" value="UreE, C-terminal domain"/>
    <property type="match status" value="1"/>
</dbReference>
<dbReference type="HAMAP" id="MF_00822">
    <property type="entry name" value="UreE"/>
    <property type="match status" value="1"/>
</dbReference>
<dbReference type="InterPro" id="IPR012406">
    <property type="entry name" value="UreE"/>
</dbReference>
<dbReference type="InterPro" id="IPR007864">
    <property type="entry name" value="UreE_C_dom"/>
</dbReference>
<dbReference type="InterPro" id="IPR004029">
    <property type="entry name" value="UreE_N"/>
</dbReference>
<dbReference type="InterPro" id="IPR036118">
    <property type="entry name" value="UreE_N_sf"/>
</dbReference>
<dbReference type="NCBIfam" id="NF009754">
    <property type="entry name" value="PRK13261.1-6"/>
    <property type="match status" value="1"/>
</dbReference>
<dbReference type="Pfam" id="PF05194">
    <property type="entry name" value="UreE_C"/>
    <property type="match status" value="1"/>
</dbReference>
<dbReference type="Pfam" id="PF02814">
    <property type="entry name" value="UreE_N"/>
    <property type="match status" value="1"/>
</dbReference>
<dbReference type="PIRSF" id="PIRSF036402">
    <property type="entry name" value="Ureas_acces_UreE"/>
    <property type="match status" value="1"/>
</dbReference>
<dbReference type="SMART" id="SM00988">
    <property type="entry name" value="UreE_N"/>
    <property type="match status" value="1"/>
</dbReference>
<dbReference type="SUPFAM" id="SSF69737">
    <property type="entry name" value="Urease metallochaperone UreE, C-terminal domain"/>
    <property type="match status" value="1"/>
</dbReference>
<dbReference type="SUPFAM" id="SSF69287">
    <property type="entry name" value="Urease metallochaperone UreE, N-terminal domain"/>
    <property type="match status" value="1"/>
</dbReference>
<gene>
    <name evidence="1" type="primary">ureE</name>
    <name type="ordered locus">CGSHiGG_05945</name>
</gene>
<proteinExistence type="inferred from homology"/>
<evidence type="ECO:0000255" key="1">
    <source>
        <dbReference type="HAMAP-Rule" id="MF_00822"/>
    </source>
</evidence>
<evidence type="ECO:0000256" key="2">
    <source>
        <dbReference type="SAM" id="MobiDB-lite"/>
    </source>
</evidence>